<dbReference type="EC" id="3.6.1.-" evidence="1"/>
<dbReference type="EMBL" id="CP000034">
    <property type="protein sequence ID" value="ABB61839.1"/>
    <property type="molecule type" value="Genomic_DNA"/>
</dbReference>
<dbReference type="RefSeq" id="WP_000456725.1">
    <property type="nucleotide sequence ID" value="NC_007606.1"/>
</dbReference>
<dbReference type="RefSeq" id="YP_403330.1">
    <property type="nucleotide sequence ID" value="NC_007606.1"/>
</dbReference>
<dbReference type="SMR" id="Q32FR6"/>
<dbReference type="STRING" id="300267.SDY_1719"/>
<dbReference type="EnsemblBacteria" id="ABB61839">
    <property type="protein sequence ID" value="ABB61839"/>
    <property type="gene ID" value="SDY_1719"/>
</dbReference>
<dbReference type="KEGG" id="sdy:SDY_1719"/>
<dbReference type="PATRIC" id="fig|300267.13.peg.2073"/>
<dbReference type="HOGENOM" id="CLU_040940_5_2_6"/>
<dbReference type="Proteomes" id="UP000002716">
    <property type="component" value="Chromosome"/>
</dbReference>
<dbReference type="GO" id="GO:0010945">
    <property type="term" value="F:coenzyme A diphosphatase activity"/>
    <property type="evidence" value="ECO:0007669"/>
    <property type="project" value="InterPro"/>
</dbReference>
<dbReference type="GO" id="GO:0000287">
    <property type="term" value="F:magnesium ion binding"/>
    <property type="evidence" value="ECO:0007669"/>
    <property type="project" value="UniProtKB-UniRule"/>
</dbReference>
<dbReference type="GO" id="GO:0030145">
    <property type="term" value="F:manganese ion binding"/>
    <property type="evidence" value="ECO:0007669"/>
    <property type="project" value="UniProtKB-UniRule"/>
</dbReference>
<dbReference type="GO" id="GO:0009132">
    <property type="term" value="P:nucleoside diphosphate metabolic process"/>
    <property type="evidence" value="ECO:0007669"/>
    <property type="project" value="InterPro"/>
</dbReference>
<dbReference type="CDD" id="cd03426">
    <property type="entry name" value="NUDIX_CoAse_Nudt7"/>
    <property type="match status" value="1"/>
</dbReference>
<dbReference type="FunFam" id="3.90.79.10:FF:000013">
    <property type="entry name" value="Uncharacterized Nudix hydrolase NudL"/>
    <property type="match status" value="1"/>
</dbReference>
<dbReference type="Gene3D" id="3.90.79.10">
    <property type="entry name" value="Nucleoside Triphosphate Pyrophosphohydrolase"/>
    <property type="match status" value="1"/>
</dbReference>
<dbReference type="HAMAP" id="MF_01592">
    <property type="entry name" value="Nudix_NudL"/>
    <property type="match status" value="1"/>
</dbReference>
<dbReference type="InterPro" id="IPR045121">
    <property type="entry name" value="CoAse"/>
</dbReference>
<dbReference type="InterPro" id="IPR015797">
    <property type="entry name" value="NUDIX_hydrolase-like_dom_sf"/>
</dbReference>
<dbReference type="InterPro" id="IPR000086">
    <property type="entry name" value="NUDIX_hydrolase_dom"/>
</dbReference>
<dbReference type="InterPro" id="IPR000059">
    <property type="entry name" value="NUDIX_hydrolase_NudL_CS"/>
</dbReference>
<dbReference type="InterPro" id="IPR023735">
    <property type="entry name" value="Nudix_NudL"/>
</dbReference>
<dbReference type="NCBIfam" id="NF007980">
    <property type="entry name" value="PRK10707.1"/>
    <property type="match status" value="1"/>
</dbReference>
<dbReference type="PANTHER" id="PTHR12992:SF11">
    <property type="entry name" value="MITOCHONDRIAL COENZYME A DIPHOSPHATASE NUDT8"/>
    <property type="match status" value="1"/>
</dbReference>
<dbReference type="PANTHER" id="PTHR12992">
    <property type="entry name" value="NUDIX HYDROLASE"/>
    <property type="match status" value="1"/>
</dbReference>
<dbReference type="Pfam" id="PF00293">
    <property type="entry name" value="NUDIX"/>
    <property type="match status" value="1"/>
</dbReference>
<dbReference type="SUPFAM" id="SSF55811">
    <property type="entry name" value="Nudix"/>
    <property type="match status" value="1"/>
</dbReference>
<dbReference type="PROSITE" id="PS51462">
    <property type="entry name" value="NUDIX"/>
    <property type="match status" value="1"/>
</dbReference>
<dbReference type="PROSITE" id="PS01293">
    <property type="entry name" value="NUDIX_COA"/>
    <property type="match status" value="1"/>
</dbReference>
<name>NUDL_SHIDS</name>
<reference key="1">
    <citation type="journal article" date="2005" name="Nucleic Acids Res.">
        <title>Genome dynamics and diversity of Shigella species, the etiologic agents of bacillary dysentery.</title>
        <authorList>
            <person name="Yang F."/>
            <person name="Yang J."/>
            <person name="Zhang X."/>
            <person name="Chen L."/>
            <person name="Jiang Y."/>
            <person name="Yan Y."/>
            <person name="Tang X."/>
            <person name="Wang J."/>
            <person name="Xiong Z."/>
            <person name="Dong J."/>
            <person name="Xue Y."/>
            <person name="Zhu Y."/>
            <person name="Xu X."/>
            <person name="Sun L."/>
            <person name="Chen S."/>
            <person name="Nie H."/>
            <person name="Peng J."/>
            <person name="Xu J."/>
            <person name="Wang Y."/>
            <person name="Yuan Z."/>
            <person name="Wen Y."/>
            <person name="Yao Z."/>
            <person name="Shen Y."/>
            <person name="Qiang B."/>
            <person name="Hou Y."/>
            <person name="Yu J."/>
            <person name="Jin Q."/>
        </authorList>
    </citation>
    <scope>NUCLEOTIDE SEQUENCE [LARGE SCALE GENOMIC DNA]</scope>
    <source>
        <strain>Sd197</strain>
    </source>
</reference>
<protein>
    <recommendedName>
        <fullName evidence="1">Uncharacterized Nudix hydrolase NudL</fullName>
        <ecNumber evidence="1">3.6.1.-</ecNumber>
    </recommendedName>
</protein>
<accession>Q32FR6</accession>
<keyword id="KW-0378">Hydrolase</keyword>
<keyword id="KW-0460">Magnesium</keyword>
<keyword id="KW-0464">Manganese</keyword>
<keyword id="KW-0479">Metal-binding</keyword>
<keyword id="KW-1185">Reference proteome</keyword>
<proteinExistence type="inferred from homology"/>
<organism>
    <name type="scientific">Shigella dysenteriae serotype 1 (strain Sd197)</name>
    <dbReference type="NCBI Taxonomy" id="300267"/>
    <lineage>
        <taxon>Bacteria</taxon>
        <taxon>Pseudomonadati</taxon>
        <taxon>Pseudomonadota</taxon>
        <taxon>Gammaproteobacteria</taxon>
        <taxon>Enterobacterales</taxon>
        <taxon>Enterobacteriaceae</taxon>
        <taxon>Shigella</taxon>
    </lineage>
</organism>
<feature type="chain" id="PRO_0000315584" description="Uncharacterized Nudix hydrolase NudL">
    <location>
        <begin position="1"/>
        <end position="192"/>
    </location>
</feature>
<feature type="domain" description="Nudix hydrolase" evidence="1">
    <location>
        <begin position="29"/>
        <end position="160"/>
    </location>
</feature>
<feature type="short sequence motif" description="Nudix box">
    <location>
        <begin position="67"/>
        <end position="89"/>
    </location>
</feature>
<feature type="binding site" evidence="1">
    <location>
        <position position="83"/>
    </location>
    <ligand>
        <name>Mg(2+)</name>
        <dbReference type="ChEBI" id="CHEBI:18420"/>
    </ligand>
</feature>
<feature type="binding site" evidence="1">
    <location>
        <position position="87"/>
    </location>
    <ligand>
        <name>Mg(2+)</name>
        <dbReference type="ChEBI" id="CHEBI:18420"/>
    </ligand>
</feature>
<evidence type="ECO:0000255" key="1">
    <source>
        <dbReference type="HAMAP-Rule" id="MF_01592"/>
    </source>
</evidence>
<comment type="function">
    <text evidence="1">Probably mediates the hydrolysis of some nucleoside diphosphate derivatives.</text>
</comment>
<comment type="cofactor">
    <cofactor evidence="1">
        <name>Mn(2+)</name>
        <dbReference type="ChEBI" id="CHEBI:29035"/>
    </cofactor>
    <cofactor evidence="1">
        <name>Mg(2+)</name>
        <dbReference type="ChEBI" id="CHEBI:18420"/>
    </cofactor>
</comment>
<comment type="similarity">
    <text evidence="1">Belongs to the Nudix hydrolase family. PCD1 subfamily.</text>
</comment>
<gene>
    <name evidence="1" type="primary">nudL</name>
    <name type="ordered locus">SDY_1719</name>
</gene>
<sequence>MEYRSLTLDDFLSRFQLLRPQINRETLNHRQAAVLIPIVRRPQPGLLLTQRSIHLRKHAGQVAFPGGAVDDTDASVIAAALREAEEEVAIPPSAVEVIGVLPPVDSVTGYQVTPVVGIIPPDLPYRASEDEVSAVFEMPLAQALHLGRYHPLDIYRRGDSHRVWLSWYEQYFVWGMTAGIIRELALQIGVKP</sequence>